<accession>Q2FY15</accession>
<sequence>MAKHPFEQFNLESSLIDAVKDLNFEKPTEIQNRIIPRILKRTNLIGQSQTGTGKSHAFLLPLMQLIDSEIKEPQAIVVAPTRELAQQLYDAANHLSQFKAGVSVKVFIGGTDIEKDRQRCNAQPQLIIGTPTRINDLAKTGHLHVHLASYLVIDEADLMIDLGLIEDVDYIAARLEDNANIAVFSATIPQQLQPFLNKYLSHPEYVAVDSKKQNKKNIEFYLIPTKGAAKVEKTLNLIDILNPYLCIIFCNSRDNANDLARSLNEAGIKVGMIHGGLTPRERKQQMKRIRNLEFQYVIASDLASRGIDIEGVSHVINFDVPNDIDFFTHRVGRTGRGNYKGVAITLYSPDEEHNISLIEDRGFVFNTVDIKDGELKEVKAHNQRQARMRKDDHLTNQVKNKVRSKIKNKVKPGYKKKFKQEVEKMKRQERKQFSKQQNRQKRKQNKKG</sequence>
<evidence type="ECO:0000255" key="1">
    <source>
        <dbReference type="HAMAP-Rule" id="MF_01494"/>
    </source>
</evidence>
<evidence type="ECO:0000256" key="2">
    <source>
        <dbReference type="SAM" id="MobiDB-lite"/>
    </source>
</evidence>
<evidence type="ECO:0000269" key="3">
    <source>
    </source>
</evidence>
<name>CSHB_STAA8</name>
<keyword id="KW-0067">ATP-binding</keyword>
<keyword id="KW-0963">Cytoplasm</keyword>
<keyword id="KW-0347">Helicase</keyword>
<keyword id="KW-0378">Hydrolase</keyword>
<keyword id="KW-0547">Nucleotide-binding</keyword>
<keyword id="KW-1185">Reference proteome</keyword>
<keyword id="KW-0694">RNA-binding</keyword>
<keyword id="KW-0346">Stress response</keyword>
<feature type="chain" id="PRO_0000430111" description="DEAD-box ATP-dependent RNA helicase CshB">
    <location>
        <begin position="1"/>
        <end position="448"/>
    </location>
</feature>
<feature type="domain" description="Helicase ATP-binding" evidence="1">
    <location>
        <begin position="35"/>
        <end position="206"/>
    </location>
</feature>
<feature type="domain" description="Helicase C-terminal" evidence="1">
    <location>
        <begin position="236"/>
        <end position="386"/>
    </location>
</feature>
<feature type="region of interest" description="Disordered" evidence="2">
    <location>
        <begin position="400"/>
        <end position="448"/>
    </location>
</feature>
<feature type="short sequence motif" description="Q motif">
    <location>
        <begin position="4"/>
        <end position="32"/>
    </location>
</feature>
<feature type="short sequence motif" description="DEAD box">
    <location>
        <begin position="154"/>
        <end position="157"/>
    </location>
</feature>
<feature type="compositionally biased region" description="Basic residues" evidence="2">
    <location>
        <begin position="400"/>
        <end position="418"/>
    </location>
</feature>
<feature type="compositionally biased region" description="Basic and acidic residues" evidence="2">
    <location>
        <begin position="419"/>
        <end position="432"/>
    </location>
</feature>
<feature type="compositionally biased region" description="Basic residues" evidence="2">
    <location>
        <begin position="438"/>
        <end position="448"/>
    </location>
</feature>
<feature type="binding site" evidence="1">
    <location>
        <begin position="48"/>
        <end position="55"/>
    </location>
    <ligand>
        <name>ATP</name>
        <dbReference type="ChEBI" id="CHEBI:30616"/>
    </ligand>
</feature>
<gene>
    <name evidence="1" type="primary">cshB</name>
    <name type="ordered locus">SAOUHSC_01659</name>
</gene>
<proteinExistence type="inferred from homology"/>
<protein>
    <recommendedName>
        <fullName evidence="1">DEAD-box ATP-dependent RNA helicase CshB</fullName>
        <ecNumber evidence="1">3.6.4.13</ecNumber>
    </recommendedName>
</protein>
<reference key="1">
    <citation type="book" date="2006" name="Gram positive pathogens, 2nd edition">
        <title>The Staphylococcus aureus NCTC 8325 genome.</title>
        <editorList>
            <person name="Fischetti V."/>
            <person name="Novick R."/>
            <person name="Ferretti J."/>
            <person name="Portnoy D."/>
            <person name="Rood J."/>
        </editorList>
        <authorList>
            <person name="Gillaspy A.F."/>
            <person name="Worrell V."/>
            <person name="Orvis J."/>
            <person name="Roe B.A."/>
            <person name="Dyer D.W."/>
            <person name="Iandolo J.J."/>
        </authorList>
    </citation>
    <scope>NUCLEOTIDE SEQUENCE [LARGE SCALE GENOMIC DNA]</scope>
    <source>
        <strain>NCTC 8325 / PS 47</strain>
    </source>
</reference>
<reference key="2">
    <citation type="journal article" date="2012" name="Appl. Environ. Microbiol.">
        <title>New range of vectors with a stringent 5-fluoroorotic acid-based counterselection system for generating mutants by allelic replacement in Staphylococcus aureus.</title>
        <authorList>
            <person name="Redder P."/>
            <person name="Linder P."/>
        </authorList>
    </citation>
    <scope>DISRUPTION PHENOTYPE</scope>
    <source>
        <strain>SA564</strain>
    </source>
</reference>
<comment type="function">
    <text evidence="1">Probable DEAD-box RNA helicase. May work in conjunction with the cold shock proteins to ensure proper initiation of transcription at low and optimal temperatures.</text>
</comment>
<comment type="catalytic activity">
    <reaction evidence="1">
        <text>ATP + H2O = ADP + phosphate + H(+)</text>
        <dbReference type="Rhea" id="RHEA:13065"/>
        <dbReference type="ChEBI" id="CHEBI:15377"/>
        <dbReference type="ChEBI" id="CHEBI:15378"/>
        <dbReference type="ChEBI" id="CHEBI:30616"/>
        <dbReference type="ChEBI" id="CHEBI:43474"/>
        <dbReference type="ChEBI" id="CHEBI:456216"/>
        <dbReference type="EC" id="3.6.4.13"/>
    </reaction>
</comment>
<comment type="subcellular location">
    <subcellularLocation>
        <location evidence="1">Cytoplasm</location>
    </subcellularLocation>
</comment>
<comment type="disruption phenotype">
    <text evidence="3">Cold sensitive. Double cshB-nfo mutants are as cold-sensitive as the single cshB mutant.</text>
</comment>
<comment type="similarity">
    <text evidence="1">Belongs to the DEAD box helicase family. CshB subfamily.</text>
</comment>
<dbReference type="EC" id="3.6.4.13" evidence="1"/>
<dbReference type="EMBL" id="CP000253">
    <property type="protein sequence ID" value="ABD30734.1"/>
    <property type="molecule type" value="Genomic_DNA"/>
</dbReference>
<dbReference type="RefSeq" id="WP_001062180.1">
    <property type="nucleotide sequence ID" value="NZ_LS483365.1"/>
</dbReference>
<dbReference type="RefSeq" id="YP_500170.1">
    <property type="nucleotide sequence ID" value="NC_007795.1"/>
</dbReference>
<dbReference type="SMR" id="Q2FY15"/>
<dbReference type="STRING" id="93061.SAOUHSC_01659"/>
<dbReference type="PaxDb" id="1280-SAXN108_1580"/>
<dbReference type="GeneID" id="3920110"/>
<dbReference type="KEGG" id="sao:SAOUHSC_01659"/>
<dbReference type="PATRIC" id="fig|93061.5.peg.1509"/>
<dbReference type="eggNOG" id="COG0513">
    <property type="taxonomic scope" value="Bacteria"/>
</dbReference>
<dbReference type="HOGENOM" id="CLU_003041_1_3_9"/>
<dbReference type="OrthoDB" id="9805696at2"/>
<dbReference type="PRO" id="PR:Q2FY15"/>
<dbReference type="Proteomes" id="UP000008816">
    <property type="component" value="Chromosome"/>
</dbReference>
<dbReference type="GO" id="GO:0005829">
    <property type="term" value="C:cytosol"/>
    <property type="evidence" value="ECO:0000318"/>
    <property type="project" value="GO_Central"/>
</dbReference>
<dbReference type="GO" id="GO:0005524">
    <property type="term" value="F:ATP binding"/>
    <property type="evidence" value="ECO:0007669"/>
    <property type="project" value="UniProtKB-UniRule"/>
</dbReference>
<dbReference type="GO" id="GO:0016887">
    <property type="term" value="F:ATP hydrolysis activity"/>
    <property type="evidence" value="ECO:0007669"/>
    <property type="project" value="RHEA"/>
</dbReference>
<dbReference type="GO" id="GO:0003724">
    <property type="term" value="F:RNA helicase activity"/>
    <property type="evidence" value="ECO:0000318"/>
    <property type="project" value="GO_Central"/>
</dbReference>
<dbReference type="GO" id="GO:0033592">
    <property type="term" value="F:RNA strand annealing activity"/>
    <property type="evidence" value="ECO:0000318"/>
    <property type="project" value="GO_Central"/>
</dbReference>
<dbReference type="GO" id="GO:0009409">
    <property type="term" value="P:response to cold"/>
    <property type="evidence" value="ECO:0000318"/>
    <property type="project" value="GO_Central"/>
</dbReference>
<dbReference type="GO" id="GO:0006401">
    <property type="term" value="P:RNA catabolic process"/>
    <property type="evidence" value="ECO:0007669"/>
    <property type="project" value="UniProtKB-UniRule"/>
</dbReference>
<dbReference type="CDD" id="cd00268">
    <property type="entry name" value="DEADc"/>
    <property type="match status" value="1"/>
</dbReference>
<dbReference type="CDD" id="cd18787">
    <property type="entry name" value="SF2_C_DEAD"/>
    <property type="match status" value="1"/>
</dbReference>
<dbReference type="Gene3D" id="3.40.50.300">
    <property type="entry name" value="P-loop containing nucleotide triphosphate hydrolases"/>
    <property type="match status" value="2"/>
</dbReference>
<dbReference type="HAMAP" id="MF_01494">
    <property type="entry name" value="DEAD_helicase_CshB"/>
    <property type="match status" value="1"/>
</dbReference>
<dbReference type="InterPro" id="IPR030881">
    <property type="entry name" value="CshB"/>
</dbReference>
<dbReference type="InterPro" id="IPR011545">
    <property type="entry name" value="DEAD/DEAH_box_helicase_dom"/>
</dbReference>
<dbReference type="InterPro" id="IPR050547">
    <property type="entry name" value="DEAD_box_RNA_helicases"/>
</dbReference>
<dbReference type="InterPro" id="IPR014001">
    <property type="entry name" value="Helicase_ATP-bd"/>
</dbReference>
<dbReference type="InterPro" id="IPR001650">
    <property type="entry name" value="Helicase_C-like"/>
</dbReference>
<dbReference type="InterPro" id="IPR027417">
    <property type="entry name" value="P-loop_NTPase"/>
</dbReference>
<dbReference type="InterPro" id="IPR014014">
    <property type="entry name" value="RNA_helicase_DEAD_Q_motif"/>
</dbReference>
<dbReference type="PANTHER" id="PTHR47963">
    <property type="entry name" value="DEAD-BOX ATP-DEPENDENT RNA HELICASE 47, MITOCHONDRIAL"/>
    <property type="match status" value="1"/>
</dbReference>
<dbReference type="PANTHER" id="PTHR47963:SF1">
    <property type="entry name" value="DEAD-BOX ATP-DEPENDENT RNA HELICASE CSHB"/>
    <property type="match status" value="1"/>
</dbReference>
<dbReference type="Pfam" id="PF00270">
    <property type="entry name" value="DEAD"/>
    <property type="match status" value="1"/>
</dbReference>
<dbReference type="Pfam" id="PF00271">
    <property type="entry name" value="Helicase_C"/>
    <property type="match status" value="1"/>
</dbReference>
<dbReference type="SMART" id="SM00487">
    <property type="entry name" value="DEXDc"/>
    <property type="match status" value="1"/>
</dbReference>
<dbReference type="SMART" id="SM00490">
    <property type="entry name" value="HELICc"/>
    <property type="match status" value="1"/>
</dbReference>
<dbReference type="SUPFAM" id="SSF52540">
    <property type="entry name" value="P-loop containing nucleoside triphosphate hydrolases"/>
    <property type="match status" value="1"/>
</dbReference>
<dbReference type="PROSITE" id="PS51192">
    <property type="entry name" value="HELICASE_ATP_BIND_1"/>
    <property type="match status" value="1"/>
</dbReference>
<dbReference type="PROSITE" id="PS51194">
    <property type="entry name" value="HELICASE_CTER"/>
    <property type="match status" value="1"/>
</dbReference>
<dbReference type="PROSITE" id="PS51195">
    <property type="entry name" value="Q_MOTIF"/>
    <property type="match status" value="1"/>
</dbReference>
<organism>
    <name type="scientific">Staphylococcus aureus (strain NCTC 8325 / PS 47)</name>
    <dbReference type="NCBI Taxonomy" id="93061"/>
    <lineage>
        <taxon>Bacteria</taxon>
        <taxon>Bacillati</taxon>
        <taxon>Bacillota</taxon>
        <taxon>Bacilli</taxon>
        <taxon>Bacillales</taxon>
        <taxon>Staphylococcaceae</taxon>
        <taxon>Staphylococcus</taxon>
    </lineage>
</organism>